<evidence type="ECO:0000255" key="1"/>
<evidence type="ECO:0000256" key="2">
    <source>
        <dbReference type="SAM" id="MobiDB-lite"/>
    </source>
</evidence>
<evidence type="ECO:0000269" key="3">
    <source>
    </source>
</evidence>
<evidence type="ECO:0000305" key="4"/>
<evidence type="ECO:0000312" key="5">
    <source>
        <dbReference type="EMBL" id="CAA19051.1"/>
    </source>
</evidence>
<name>YN43_SCHPO</name>
<keyword id="KW-0256">Endoplasmic reticulum</keyword>
<keyword id="KW-0472">Membrane</keyword>
<keyword id="KW-1185">Reference proteome</keyword>
<keyword id="KW-0812">Transmembrane</keyword>
<keyword id="KW-1133">Transmembrane helix</keyword>
<keyword id="KW-0813">Transport</keyword>
<protein>
    <recommendedName>
        <fullName>Uncharacterized transporter C36.03c</fullName>
    </recommendedName>
</protein>
<sequence>MYNNNSSTSSDSSNSEEKANAQHASSTDSTSEHTDPAVADEGFPAEQYQSADLEKQQLLIEEGPGGFPYITNPERFYVSLEPSDPRLAVNWPTHVKILHVALLAFTTLTASWGSSVFSAAATIFAAKYHIGLTVALLGMSLYVCGFASGPILWAPISELVGRKIPLIVGMFMFSIFSIAVAVAKDVQTVMICRFFSGFCASSPLSVVAAAFADMFDNKTRGPAVCIFACITFAGPLIGPIAGGFLAKSYLGWRWTEYITSFMGFFSTLCLLFMKECYSRTITEQEAARLRVEYNNNFIRAKSEEEYIDFKALAKRYLAVPFVLLFCEPIVFLLTLYMSFVYGILYLLLEAYPIIFAEKRHFSLGVDALPYIGLLVGVILGAALIAYFQGYYNRKLDANGGKPVPEARLPPMMIGSVLFPAGIFWLAWSGYYTHVHWIVPTLSGLLTGCGILTIFMQSLIYLIDAYLFRAASVIAANTIMRSLVAAGFPLFAVQMFHNMGIGWAGSLLGFIATALIPIPTLFFIFGKRIRLMSKNTVNL</sequence>
<reference evidence="5" key="1">
    <citation type="journal article" date="2002" name="Nature">
        <title>The genome sequence of Schizosaccharomyces pombe.</title>
        <authorList>
            <person name="Wood V."/>
            <person name="Gwilliam R."/>
            <person name="Rajandream M.A."/>
            <person name="Lyne M.H."/>
            <person name="Lyne R."/>
            <person name="Stewart A."/>
            <person name="Sgouros J.G."/>
            <person name="Peat N."/>
            <person name="Hayles J."/>
            <person name="Baker S.G."/>
            <person name="Basham D."/>
            <person name="Bowman S."/>
            <person name="Brooks K."/>
            <person name="Brown D."/>
            <person name="Brown S."/>
            <person name="Chillingworth T."/>
            <person name="Churcher C.M."/>
            <person name="Collins M."/>
            <person name="Connor R."/>
            <person name="Cronin A."/>
            <person name="Davis P."/>
            <person name="Feltwell T."/>
            <person name="Fraser A."/>
            <person name="Gentles S."/>
            <person name="Goble A."/>
            <person name="Hamlin N."/>
            <person name="Harris D.E."/>
            <person name="Hidalgo J."/>
            <person name="Hodgson G."/>
            <person name="Holroyd S."/>
            <person name="Hornsby T."/>
            <person name="Howarth S."/>
            <person name="Huckle E.J."/>
            <person name="Hunt S."/>
            <person name="Jagels K."/>
            <person name="James K.D."/>
            <person name="Jones L."/>
            <person name="Jones M."/>
            <person name="Leather S."/>
            <person name="McDonald S."/>
            <person name="McLean J."/>
            <person name="Mooney P."/>
            <person name="Moule S."/>
            <person name="Mungall K.L."/>
            <person name="Murphy L.D."/>
            <person name="Niblett D."/>
            <person name="Odell C."/>
            <person name="Oliver K."/>
            <person name="O'Neil S."/>
            <person name="Pearson D."/>
            <person name="Quail M.A."/>
            <person name="Rabbinowitsch E."/>
            <person name="Rutherford K.M."/>
            <person name="Rutter S."/>
            <person name="Saunders D."/>
            <person name="Seeger K."/>
            <person name="Sharp S."/>
            <person name="Skelton J."/>
            <person name="Simmonds M.N."/>
            <person name="Squares R."/>
            <person name="Squares S."/>
            <person name="Stevens K."/>
            <person name="Taylor K."/>
            <person name="Taylor R.G."/>
            <person name="Tivey A."/>
            <person name="Walsh S.V."/>
            <person name="Warren T."/>
            <person name="Whitehead S."/>
            <person name="Woodward J.R."/>
            <person name="Volckaert G."/>
            <person name="Aert R."/>
            <person name="Robben J."/>
            <person name="Grymonprez B."/>
            <person name="Weltjens I."/>
            <person name="Vanstreels E."/>
            <person name="Rieger M."/>
            <person name="Schaefer M."/>
            <person name="Mueller-Auer S."/>
            <person name="Gabel C."/>
            <person name="Fuchs M."/>
            <person name="Duesterhoeft A."/>
            <person name="Fritzc C."/>
            <person name="Holzer E."/>
            <person name="Moestl D."/>
            <person name="Hilbert H."/>
            <person name="Borzym K."/>
            <person name="Langer I."/>
            <person name="Beck A."/>
            <person name="Lehrach H."/>
            <person name="Reinhardt R."/>
            <person name="Pohl T.M."/>
            <person name="Eger P."/>
            <person name="Zimmermann W."/>
            <person name="Wedler H."/>
            <person name="Wambutt R."/>
            <person name="Purnelle B."/>
            <person name="Goffeau A."/>
            <person name="Cadieu E."/>
            <person name="Dreano S."/>
            <person name="Gloux S."/>
            <person name="Lelaure V."/>
            <person name="Mottier S."/>
            <person name="Galibert F."/>
            <person name="Aves S.J."/>
            <person name="Xiang Z."/>
            <person name="Hunt C."/>
            <person name="Moore K."/>
            <person name="Hurst S.M."/>
            <person name="Lucas M."/>
            <person name="Rochet M."/>
            <person name="Gaillardin C."/>
            <person name="Tallada V.A."/>
            <person name="Garzon A."/>
            <person name="Thode G."/>
            <person name="Daga R.R."/>
            <person name="Cruzado L."/>
            <person name="Jimenez J."/>
            <person name="Sanchez M."/>
            <person name="del Rey F."/>
            <person name="Benito J."/>
            <person name="Dominguez A."/>
            <person name="Revuelta J.L."/>
            <person name="Moreno S."/>
            <person name="Armstrong J."/>
            <person name="Forsburg S.L."/>
            <person name="Cerutti L."/>
            <person name="Lowe T."/>
            <person name="McCombie W.R."/>
            <person name="Paulsen I."/>
            <person name="Potashkin J."/>
            <person name="Shpakovski G.V."/>
            <person name="Ussery D."/>
            <person name="Barrell B.G."/>
            <person name="Nurse P."/>
        </authorList>
    </citation>
    <scope>NUCLEOTIDE SEQUENCE [LARGE SCALE GENOMIC DNA]</scope>
    <source>
        <strain>972 / ATCC 24843</strain>
    </source>
</reference>
<reference evidence="4" key="2">
    <citation type="journal article" date="2006" name="Nat. Biotechnol.">
        <title>ORFeome cloning and global analysis of protein localization in the fission yeast Schizosaccharomyces pombe.</title>
        <authorList>
            <person name="Matsuyama A."/>
            <person name="Arai R."/>
            <person name="Yashiroda Y."/>
            <person name="Shirai A."/>
            <person name="Kamata A."/>
            <person name="Sekido S."/>
            <person name="Kobayashi Y."/>
            <person name="Hashimoto A."/>
            <person name="Hamamoto M."/>
            <person name="Hiraoka Y."/>
            <person name="Horinouchi S."/>
            <person name="Yoshida M."/>
        </authorList>
    </citation>
    <scope>SUBCELLULAR LOCATION [LARGE SCALE ANALYSIS]</scope>
</reference>
<accession>O59700</accession>
<gene>
    <name type="ORF">SPBC36.03c</name>
</gene>
<proteinExistence type="inferred from homology"/>
<comment type="subcellular location">
    <subcellularLocation>
        <location evidence="3">Endoplasmic reticulum</location>
    </subcellularLocation>
    <subcellularLocation>
        <location evidence="1">Membrane</location>
        <topology evidence="1">Multi-pass membrane protein</topology>
    </subcellularLocation>
</comment>
<comment type="similarity">
    <text evidence="1">Belongs to the major facilitator superfamily. CAR1 family.</text>
</comment>
<organism>
    <name type="scientific">Schizosaccharomyces pombe (strain 972 / ATCC 24843)</name>
    <name type="common">Fission yeast</name>
    <dbReference type="NCBI Taxonomy" id="284812"/>
    <lineage>
        <taxon>Eukaryota</taxon>
        <taxon>Fungi</taxon>
        <taxon>Dikarya</taxon>
        <taxon>Ascomycota</taxon>
        <taxon>Taphrinomycotina</taxon>
        <taxon>Schizosaccharomycetes</taxon>
        <taxon>Schizosaccharomycetales</taxon>
        <taxon>Schizosaccharomycetaceae</taxon>
        <taxon>Schizosaccharomyces</taxon>
    </lineage>
</organism>
<feature type="chain" id="PRO_0000372793" description="Uncharacterized transporter C36.03c">
    <location>
        <begin position="1"/>
        <end position="538"/>
    </location>
</feature>
<feature type="transmembrane region" description="Helical" evidence="1">
    <location>
        <begin position="97"/>
        <end position="117"/>
    </location>
</feature>
<feature type="transmembrane region" description="Helical" evidence="1">
    <location>
        <begin position="134"/>
        <end position="154"/>
    </location>
</feature>
<feature type="transmembrane region" description="Helical" evidence="1">
    <location>
        <begin position="163"/>
        <end position="183"/>
    </location>
</feature>
<feature type="transmembrane region" description="Helical" evidence="1">
    <location>
        <begin position="194"/>
        <end position="214"/>
    </location>
</feature>
<feature type="transmembrane region" description="Helical" evidence="1">
    <location>
        <begin position="226"/>
        <end position="246"/>
    </location>
</feature>
<feature type="transmembrane region" description="Helical" evidence="1">
    <location>
        <begin position="254"/>
        <end position="274"/>
    </location>
</feature>
<feature type="transmembrane region" description="Helical" evidence="1">
    <location>
        <begin position="328"/>
        <end position="348"/>
    </location>
</feature>
<feature type="transmembrane region" description="Helical" evidence="1">
    <location>
        <begin position="367"/>
        <end position="387"/>
    </location>
</feature>
<feature type="transmembrane region" description="Helical" evidence="1">
    <location>
        <begin position="408"/>
        <end position="428"/>
    </location>
</feature>
<feature type="transmembrane region" description="Helical" evidence="1">
    <location>
        <begin position="434"/>
        <end position="454"/>
    </location>
</feature>
<feature type="transmembrane region" description="Helical" evidence="1">
    <location>
        <begin position="458"/>
        <end position="478"/>
    </location>
</feature>
<feature type="transmembrane region" description="Helical" evidence="1">
    <location>
        <begin position="504"/>
        <end position="524"/>
    </location>
</feature>
<feature type="region of interest" description="Disordered" evidence="2">
    <location>
        <begin position="1"/>
        <end position="43"/>
    </location>
</feature>
<feature type="compositionally biased region" description="Low complexity" evidence="2">
    <location>
        <begin position="1"/>
        <end position="13"/>
    </location>
</feature>
<dbReference type="EMBL" id="CU329671">
    <property type="protein sequence ID" value="CAA19051.1"/>
    <property type="molecule type" value="Genomic_DNA"/>
</dbReference>
<dbReference type="PIR" id="T40298">
    <property type="entry name" value="T40298"/>
</dbReference>
<dbReference type="BioGRID" id="277456">
    <property type="interactions" value="2"/>
</dbReference>
<dbReference type="FunCoup" id="O59700">
    <property type="interactions" value="133"/>
</dbReference>
<dbReference type="STRING" id="284812.O59700"/>
<dbReference type="iPTMnet" id="O59700"/>
<dbReference type="SwissPalm" id="O59700"/>
<dbReference type="PaxDb" id="4896-SPBC36.03c.1"/>
<dbReference type="EnsemblFungi" id="SPBC36.03c.1">
    <property type="protein sequence ID" value="SPBC36.03c.1:pep"/>
    <property type="gene ID" value="SPBC36.03c"/>
</dbReference>
<dbReference type="KEGG" id="spo:2540940"/>
<dbReference type="PomBase" id="SPBC36.03c"/>
<dbReference type="VEuPathDB" id="FungiDB:SPBC36.03c"/>
<dbReference type="eggNOG" id="KOG0255">
    <property type="taxonomic scope" value="Eukaryota"/>
</dbReference>
<dbReference type="HOGENOM" id="CLU_008455_11_4_1"/>
<dbReference type="InParanoid" id="O59700"/>
<dbReference type="OMA" id="AYIPSFM"/>
<dbReference type="PhylomeDB" id="O59700"/>
<dbReference type="PRO" id="PR:O59700"/>
<dbReference type="Proteomes" id="UP000002485">
    <property type="component" value="Chromosome II"/>
</dbReference>
<dbReference type="GO" id="GO:0005783">
    <property type="term" value="C:endoplasmic reticulum"/>
    <property type="evidence" value="ECO:0007669"/>
    <property type="project" value="UniProtKB-SubCell"/>
</dbReference>
<dbReference type="GO" id="GO:0000324">
    <property type="term" value="C:fungal-type vacuole"/>
    <property type="evidence" value="ECO:0000314"/>
    <property type="project" value="PomBase"/>
</dbReference>
<dbReference type="GO" id="GO:0005886">
    <property type="term" value="C:plasma membrane"/>
    <property type="evidence" value="ECO:0000266"/>
    <property type="project" value="PomBase"/>
</dbReference>
<dbReference type="GO" id="GO:0015606">
    <property type="term" value="F:spermidine transmembrane transporter activity"/>
    <property type="evidence" value="ECO:0000266"/>
    <property type="project" value="PomBase"/>
</dbReference>
<dbReference type="GO" id="GO:0000297">
    <property type="term" value="F:spermine transmembrane transporter activity"/>
    <property type="evidence" value="ECO:0000266"/>
    <property type="project" value="PomBase"/>
</dbReference>
<dbReference type="GO" id="GO:0022857">
    <property type="term" value="F:transmembrane transporter activity"/>
    <property type="evidence" value="ECO:0000318"/>
    <property type="project" value="GO_Central"/>
</dbReference>
<dbReference type="GO" id="GO:1903711">
    <property type="term" value="P:spermidine transmembrane transport"/>
    <property type="evidence" value="ECO:0000305"/>
    <property type="project" value="PomBase"/>
</dbReference>
<dbReference type="GO" id="GO:1903710">
    <property type="term" value="P:spermine transmembrane transport"/>
    <property type="evidence" value="ECO:0000305"/>
    <property type="project" value="PomBase"/>
</dbReference>
<dbReference type="GO" id="GO:0055085">
    <property type="term" value="P:transmembrane transport"/>
    <property type="evidence" value="ECO:0000318"/>
    <property type="project" value="GO_Central"/>
</dbReference>
<dbReference type="CDD" id="cd17323">
    <property type="entry name" value="MFS_Tpo1_MDR_like"/>
    <property type="match status" value="1"/>
</dbReference>
<dbReference type="FunFam" id="1.20.1250.20:FF:000011">
    <property type="entry name" value="MFS multidrug transporter, putative"/>
    <property type="match status" value="1"/>
</dbReference>
<dbReference type="Gene3D" id="1.20.1250.20">
    <property type="entry name" value="MFS general substrate transporter like domains"/>
    <property type="match status" value="1"/>
</dbReference>
<dbReference type="InterPro" id="IPR011701">
    <property type="entry name" value="MFS"/>
</dbReference>
<dbReference type="InterPro" id="IPR020846">
    <property type="entry name" value="MFS_dom"/>
</dbReference>
<dbReference type="InterPro" id="IPR036259">
    <property type="entry name" value="MFS_trans_sf"/>
</dbReference>
<dbReference type="PANTHER" id="PTHR23502">
    <property type="entry name" value="MAJOR FACILITATOR SUPERFAMILY"/>
    <property type="match status" value="1"/>
</dbReference>
<dbReference type="PANTHER" id="PTHR23502:SF31">
    <property type="entry name" value="POLYAMINE TRANSPORTER 1"/>
    <property type="match status" value="1"/>
</dbReference>
<dbReference type="Pfam" id="PF07690">
    <property type="entry name" value="MFS_1"/>
    <property type="match status" value="1"/>
</dbReference>
<dbReference type="SUPFAM" id="SSF103473">
    <property type="entry name" value="MFS general substrate transporter"/>
    <property type="match status" value="1"/>
</dbReference>
<dbReference type="PROSITE" id="PS50850">
    <property type="entry name" value="MFS"/>
    <property type="match status" value="1"/>
</dbReference>